<keyword id="KW-1185">Reference proteome</keyword>
<keyword id="KW-0687">Ribonucleoprotein</keyword>
<keyword id="KW-0689">Ribosomal protein</keyword>
<gene>
    <name type="primary">rpl17</name>
    <name type="ORF">DDB_G0285277</name>
</gene>
<evidence type="ECO:0000256" key="1">
    <source>
        <dbReference type="SAM" id="MobiDB-lite"/>
    </source>
</evidence>
<evidence type="ECO:0000305" key="2"/>
<feature type="chain" id="PRO_0000323402" description="Large ribosomal subunit protein uL22">
    <location>
        <begin position="1"/>
        <end position="180"/>
    </location>
</feature>
<feature type="region of interest" description="Disordered" evidence="1">
    <location>
        <begin position="1"/>
        <end position="20"/>
    </location>
</feature>
<feature type="region of interest" description="Disordered" evidence="1">
    <location>
        <begin position="160"/>
        <end position="180"/>
    </location>
</feature>
<feature type="compositionally biased region" description="Polar residues" evidence="1">
    <location>
        <begin position="8"/>
        <end position="20"/>
    </location>
</feature>
<comment type="similarity">
    <text evidence="2">Belongs to the universal ribosomal protein uL22 family.</text>
</comment>
<reference key="1">
    <citation type="journal article" date="2005" name="Nature">
        <title>The genome of the social amoeba Dictyostelium discoideum.</title>
        <authorList>
            <person name="Eichinger L."/>
            <person name="Pachebat J.A."/>
            <person name="Gloeckner G."/>
            <person name="Rajandream M.A."/>
            <person name="Sucgang R."/>
            <person name="Berriman M."/>
            <person name="Song J."/>
            <person name="Olsen R."/>
            <person name="Szafranski K."/>
            <person name="Xu Q."/>
            <person name="Tunggal B."/>
            <person name="Kummerfeld S."/>
            <person name="Madera M."/>
            <person name="Konfortov B.A."/>
            <person name="Rivero F."/>
            <person name="Bankier A.T."/>
            <person name="Lehmann R."/>
            <person name="Hamlin N."/>
            <person name="Davies R."/>
            <person name="Gaudet P."/>
            <person name="Fey P."/>
            <person name="Pilcher K."/>
            <person name="Chen G."/>
            <person name="Saunders D."/>
            <person name="Sodergren E.J."/>
            <person name="Davis P."/>
            <person name="Kerhornou A."/>
            <person name="Nie X."/>
            <person name="Hall N."/>
            <person name="Anjard C."/>
            <person name="Hemphill L."/>
            <person name="Bason N."/>
            <person name="Farbrother P."/>
            <person name="Desany B."/>
            <person name="Just E."/>
            <person name="Morio T."/>
            <person name="Rost R."/>
            <person name="Churcher C.M."/>
            <person name="Cooper J."/>
            <person name="Haydock S."/>
            <person name="van Driessche N."/>
            <person name="Cronin A."/>
            <person name="Goodhead I."/>
            <person name="Muzny D.M."/>
            <person name="Mourier T."/>
            <person name="Pain A."/>
            <person name="Lu M."/>
            <person name="Harper D."/>
            <person name="Lindsay R."/>
            <person name="Hauser H."/>
            <person name="James K.D."/>
            <person name="Quiles M."/>
            <person name="Madan Babu M."/>
            <person name="Saito T."/>
            <person name="Buchrieser C."/>
            <person name="Wardroper A."/>
            <person name="Felder M."/>
            <person name="Thangavelu M."/>
            <person name="Johnson D."/>
            <person name="Knights A."/>
            <person name="Loulseged H."/>
            <person name="Mungall K.L."/>
            <person name="Oliver K."/>
            <person name="Price C."/>
            <person name="Quail M.A."/>
            <person name="Urushihara H."/>
            <person name="Hernandez J."/>
            <person name="Rabbinowitsch E."/>
            <person name="Steffen D."/>
            <person name="Sanders M."/>
            <person name="Ma J."/>
            <person name="Kohara Y."/>
            <person name="Sharp S."/>
            <person name="Simmonds M.N."/>
            <person name="Spiegler S."/>
            <person name="Tivey A."/>
            <person name="Sugano S."/>
            <person name="White B."/>
            <person name="Walker D."/>
            <person name="Woodward J.R."/>
            <person name="Winckler T."/>
            <person name="Tanaka Y."/>
            <person name="Shaulsky G."/>
            <person name="Schleicher M."/>
            <person name="Weinstock G.M."/>
            <person name="Rosenthal A."/>
            <person name="Cox E.C."/>
            <person name="Chisholm R.L."/>
            <person name="Gibbs R.A."/>
            <person name="Loomis W.F."/>
            <person name="Platzer M."/>
            <person name="Kay R.R."/>
            <person name="Williams J.G."/>
            <person name="Dear P.H."/>
            <person name="Noegel A.A."/>
            <person name="Barrell B.G."/>
            <person name="Kuspa A."/>
        </authorList>
    </citation>
    <scope>NUCLEOTIDE SEQUENCE [LARGE SCALE GENOMIC DNA]</scope>
    <source>
        <strain>AX4</strain>
    </source>
</reference>
<name>RL17_DICDI</name>
<protein>
    <recommendedName>
        <fullName evidence="2">Large ribosomal subunit protein uL22</fullName>
    </recommendedName>
    <alternativeName>
        <fullName>60S ribosomal protein L17</fullName>
    </alternativeName>
</protein>
<accession>Q54NG2</accession>
<proteinExistence type="inferred from homology"/>
<dbReference type="EMBL" id="AAFI02000077">
    <property type="protein sequence ID" value="EAL64802.1"/>
    <property type="molecule type" value="Genomic_DNA"/>
</dbReference>
<dbReference type="RefSeq" id="XP_638307.1">
    <property type="nucleotide sequence ID" value="XM_633215.1"/>
</dbReference>
<dbReference type="SMR" id="Q54NG2"/>
<dbReference type="FunCoup" id="Q54NG2">
    <property type="interactions" value="472"/>
</dbReference>
<dbReference type="STRING" id="44689.Q54NG2"/>
<dbReference type="PaxDb" id="44689-DDB0229959"/>
<dbReference type="EnsemblProtists" id="EAL64802">
    <property type="protein sequence ID" value="EAL64802"/>
    <property type="gene ID" value="DDB_G0285277"/>
</dbReference>
<dbReference type="GeneID" id="8625024"/>
<dbReference type="KEGG" id="ddi:DDB_G0285277"/>
<dbReference type="dictyBase" id="DDB_G0285277">
    <property type="gene designation" value="rpl17"/>
</dbReference>
<dbReference type="VEuPathDB" id="AmoebaDB:DDB_G0285277"/>
<dbReference type="eggNOG" id="KOG3353">
    <property type="taxonomic scope" value="Eukaryota"/>
</dbReference>
<dbReference type="HOGENOM" id="CLU_083987_0_1_1"/>
<dbReference type="InParanoid" id="Q54NG2"/>
<dbReference type="OMA" id="NTYETAR"/>
<dbReference type="PhylomeDB" id="Q54NG2"/>
<dbReference type="Reactome" id="R-DDI-156827">
    <property type="pathway name" value="L13a-mediated translational silencing of Ceruloplasmin expression"/>
</dbReference>
<dbReference type="Reactome" id="R-DDI-1799339">
    <property type="pathway name" value="SRP-dependent cotranslational protein targeting to membrane"/>
</dbReference>
<dbReference type="Reactome" id="R-DDI-72689">
    <property type="pathway name" value="Formation of a pool of free 40S subunits"/>
</dbReference>
<dbReference type="Reactome" id="R-DDI-72706">
    <property type="pathway name" value="GTP hydrolysis and joining of the 60S ribosomal subunit"/>
</dbReference>
<dbReference type="Reactome" id="R-DDI-975956">
    <property type="pathway name" value="Nonsense Mediated Decay (NMD) independent of the Exon Junction Complex (EJC)"/>
</dbReference>
<dbReference type="Reactome" id="R-DDI-975957">
    <property type="pathway name" value="Nonsense Mediated Decay (NMD) enhanced by the Exon Junction Complex (EJC)"/>
</dbReference>
<dbReference type="PRO" id="PR:Q54NG2"/>
<dbReference type="Proteomes" id="UP000002195">
    <property type="component" value="Chromosome 4"/>
</dbReference>
<dbReference type="GO" id="GO:0022625">
    <property type="term" value="C:cytosolic large ribosomal subunit"/>
    <property type="evidence" value="ECO:0000318"/>
    <property type="project" value="GO_Central"/>
</dbReference>
<dbReference type="GO" id="GO:0031012">
    <property type="term" value="C:extracellular matrix"/>
    <property type="evidence" value="ECO:0007005"/>
    <property type="project" value="dictyBase"/>
</dbReference>
<dbReference type="GO" id="GO:0003735">
    <property type="term" value="F:structural constituent of ribosome"/>
    <property type="evidence" value="ECO:0000318"/>
    <property type="project" value="GO_Central"/>
</dbReference>
<dbReference type="GO" id="GO:0002181">
    <property type="term" value="P:cytoplasmic translation"/>
    <property type="evidence" value="ECO:0000318"/>
    <property type="project" value="GO_Central"/>
</dbReference>
<dbReference type="CDD" id="cd00336">
    <property type="entry name" value="Ribosomal_L22"/>
    <property type="match status" value="1"/>
</dbReference>
<dbReference type="FunFam" id="3.90.470.10:FF:000012">
    <property type="entry name" value="60S ribosomal protein L17"/>
    <property type="match status" value="1"/>
</dbReference>
<dbReference type="Gene3D" id="3.90.470.10">
    <property type="entry name" value="Ribosomal protein L22/L17"/>
    <property type="match status" value="1"/>
</dbReference>
<dbReference type="InterPro" id="IPR001063">
    <property type="entry name" value="Ribosomal_uL22"/>
</dbReference>
<dbReference type="InterPro" id="IPR005721">
    <property type="entry name" value="Ribosomal_uL22_euk/arc"/>
</dbReference>
<dbReference type="InterPro" id="IPR036394">
    <property type="entry name" value="Ribosomal_uL22_sf"/>
</dbReference>
<dbReference type="NCBIfam" id="TIGR01038">
    <property type="entry name" value="uL22_arch_euk"/>
    <property type="match status" value="1"/>
</dbReference>
<dbReference type="PANTHER" id="PTHR11593">
    <property type="entry name" value="60S RIBOSOMAL PROTEIN L17"/>
    <property type="match status" value="1"/>
</dbReference>
<dbReference type="PANTHER" id="PTHR11593:SF10">
    <property type="entry name" value="60S RIBOSOMAL PROTEIN L17"/>
    <property type="match status" value="1"/>
</dbReference>
<dbReference type="Pfam" id="PF00237">
    <property type="entry name" value="Ribosomal_L22"/>
    <property type="match status" value="1"/>
</dbReference>
<dbReference type="SUPFAM" id="SSF54843">
    <property type="entry name" value="Ribosomal protein L22"/>
    <property type="match status" value="1"/>
</dbReference>
<organism>
    <name type="scientific">Dictyostelium discoideum</name>
    <name type="common">Social amoeba</name>
    <dbReference type="NCBI Taxonomy" id="44689"/>
    <lineage>
        <taxon>Eukaryota</taxon>
        <taxon>Amoebozoa</taxon>
        <taxon>Evosea</taxon>
        <taxon>Eumycetozoa</taxon>
        <taxon>Dictyostelia</taxon>
        <taxon>Dictyosteliales</taxon>
        <taxon>Dictyosteliaceae</taxon>
        <taxon>Dictyostelium</taxon>
    </lineage>
</organism>
<sequence>MTKPVYSKTPSNPEKSCKSRGSNLRIHFKNTRESAMAIKGMLLTRAKAYLNNVLAHRECIPFRRFKGGVGRTGQAKIFGTSQGRWPKKSVEHILSLLQNAEANAEAKGLNVEKLKIAHVQVQRAQQQRRRTYRAHGRINPYMCSPSTVEFILTEVEKAVPKPAEESAQKKKSVATQEISA</sequence>